<sequence>MAQKKGGGSTRNGRDSQPKMLGVKKFGGEVINAGSIIVRQRGTQFHPGVNVGIGKDHTLYALVDGQVSFAIKGSMNKRTVNVTAA</sequence>
<accession>A1VK91</accession>
<comment type="similarity">
    <text evidence="1">Belongs to the bacterial ribosomal protein bL27 family.</text>
</comment>
<keyword id="KW-1185">Reference proteome</keyword>
<keyword id="KW-0687">Ribonucleoprotein</keyword>
<keyword id="KW-0689">Ribosomal protein</keyword>
<evidence type="ECO:0000255" key="1">
    <source>
        <dbReference type="HAMAP-Rule" id="MF_00539"/>
    </source>
</evidence>
<evidence type="ECO:0000256" key="2">
    <source>
        <dbReference type="SAM" id="MobiDB-lite"/>
    </source>
</evidence>
<evidence type="ECO:0000305" key="3"/>
<organism>
    <name type="scientific">Polaromonas naphthalenivorans (strain CJ2)</name>
    <dbReference type="NCBI Taxonomy" id="365044"/>
    <lineage>
        <taxon>Bacteria</taxon>
        <taxon>Pseudomonadati</taxon>
        <taxon>Pseudomonadota</taxon>
        <taxon>Betaproteobacteria</taxon>
        <taxon>Burkholderiales</taxon>
        <taxon>Comamonadaceae</taxon>
        <taxon>Polaromonas</taxon>
    </lineage>
</organism>
<protein>
    <recommendedName>
        <fullName evidence="1">Large ribosomal subunit protein bL27</fullName>
    </recommendedName>
    <alternativeName>
        <fullName evidence="3">50S ribosomal protein L27</fullName>
    </alternativeName>
</protein>
<reference key="1">
    <citation type="journal article" date="2009" name="Environ. Microbiol.">
        <title>The genome of Polaromonas naphthalenivorans strain CJ2, isolated from coal tar-contaminated sediment, reveals physiological and metabolic versatility and evolution through extensive horizontal gene transfer.</title>
        <authorList>
            <person name="Yagi J.M."/>
            <person name="Sims D."/>
            <person name="Brettin T."/>
            <person name="Bruce D."/>
            <person name="Madsen E.L."/>
        </authorList>
    </citation>
    <scope>NUCLEOTIDE SEQUENCE [LARGE SCALE GENOMIC DNA]</scope>
    <source>
        <strain>CJ2</strain>
    </source>
</reference>
<dbReference type="EMBL" id="CP000529">
    <property type="protein sequence ID" value="ABM36069.1"/>
    <property type="molecule type" value="Genomic_DNA"/>
</dbReference>
<dbReference type="RefSeq" id="WP_011800164.1">
    <property type="nucleotide sequence ID" value="NC_008781.1"/>
</dbReference>
<dbReference type="SMR" id="A1VK91"/>
<dbReference type="STRING" id="365044.Pnap_0750"/>
<dbReference type="KEGG" id="pna:Pnap_0750"/>
<dbReference type="eggNOG" id="COG0211">
    <property type="taxonomic scope" value="Bacteria"/>
</dbReference>
<dbReference type="HOGENOM" id="CLU_095424_4_1_4"/>
<dbReference type="OrthoDB" id="9803474at2"/>
<dbReference type="Proteomes" id="UP000000644">
    <property type="component" value="Chromosome"/>
</dbReference>
<dbReference type="GO" id="GO:0022625">
    <property type="term" value="C:cytosolic large ribosomal subunit"/>
    <property type="evidence" value="ECO:0007669"/>
    <property type="project" value="TreeGrafter"/>
</dbReference>
<dbReference type="GO" id="GO:0003735">
    <property type="term" value="F:structural constituent of ribosome"/>
    <property type="evidence" value="ECO:0007669"/>
    <property type="project" value="InterPro"/>
</dbReference>
<dbReference type="GO" id="GO:0006412">
    <property type="term" value="P:translation"/>
    <property type="evidence" value="ECO:0007669"/>
    <property type="project" value="UniProtKB-UniRule"/>
</dbReference>
<dbReference type="FunFam" id="2.40.50.100:FF:000020">
    <property type="entry name" value="50S ribosomal protein L27"/>
    <property type="match status" value="1"/>
</dbReference>
<dbReference type="Gene3D" id="2.40.50.100">
    <property type="match status" value="1"/>
</dbReference>
<dbReference type="HAMAP" id="MF_00539">
    <property type="entry name" value="Ribosomal_bL27"/>
    <property type="match status" value="1"/>
</dbReference>
<dbReference type="InterPro" id="IPR001684">
    <property type="entry name" value="Ribosomal_bL27"/>
</dbReference>
<dbReference type="InterPro" id="IPR018261">
    <property type="entry name" value="Ribosomal_bL27_CS"/>
</dbReference>
<dbReference type="NCBIfam" id="TIGR00062">
    <property type="entry name" value="L27"/>
    <property type="match status" value="1"/>
</dbReference>
<dbReference type="PANTHER" id="PTHR15893:SF0">
    <property type="entry name" value="LARGE RIBOSOMAL SUBUNIT PROTEIN BL27M"/>
    <property type="match status" value="1"/>
</dbReference>
<dbReference type="PANTHER" id="PTHR15893">
    <property type="entry name" value="RIBOSOMAL PROTEIN L27"/>
    <property type="match status" value="1"/>
</dbReference>
<dbReference type="Pfam" id="PF01016">
    <property type="entry name" value="Ribosomal_L27"/>
    <property type="match status" value="1"/>
</dbReference>
<dbReference type="PRINTS" id="PR00063">
    <property type="entry name" value="RIBOSOMALL27"/>
</dbReference>
<dbReference type="SUPFAM" id="SSF110324">
    <property type="entry name" value="Ribosomal L27 protein-like"/>
    <property type="match status" value="1"/>
</dbReference>
<dbReference type="PROSITE" id="PS00831">
    <property type="entry name" value="RIBOSOMAL_L27"/>
    <property type="match status" value="1"/>
</dbReference>
<feature type="chain" id="PRO_1000017546" description="Large ribosomal subunit protein bL27">
    <location>
        <begin position="1"/>
        <end position="85"/>
    </location>
</feature>
<feature type="region of interest" description="Disordered" evidence="2">
    <location>
        <begin position="1"/>
        <end position="21"/>
    </location>
</feature>
<feature type="compositionally biased region" description="Gly residues" evidence="2">
    <location>
        <begin position="1"/>
        <end position="10"/>
    </location>
</feature>
<name>RL27_POLNA</name>
<proteinExistence type="inferred from homology"/>
<gene>
    <name evidence="1" type="primary">rpmA</name>
    <name type="ordered locus">Pnap_0750</name>
</gene>